<accession>P9WGM1</accession>
<accession>L0T590</accession>
<accession>P0A5Z6</accession>
<accession>Q10531</accession>
<proteinExistence type="evidence at protein level"/>
<feature type="chain" id="PRO_0000081327" description="Transcriptional regulatory protein PrrA">
    <location>
        <begin position="1"/>
        <end position="233"/>
    </location>
</feature>
<feature type="domain" description="Response regulatory" evidence="1">
    <location>
        <begin position="9"/>
        <end position="123"/>
    </location>
</feature>
<feature type="DNA-binding region" description="OmpR/PhoB-type" evidence="2">
    <location>
        <begin position="134"/>
        <end position="232"/>
    </location>
</feature>
<feature type="binding site" evidence="5 9">
    <location>
        <position position="15"/>
    </location>
    <ligand>
        <name>Mg(2+)</name>
        <dbReference type="ChEBI" id="CHEBI:18420"/>
    </ligand>
</feature>
<feature type="binding site" evidence="5 9">
    <location>
        <position position="58"/>
    </location>
    <ligand>
        <name>Mg(2+)</name>
        <dbReference type="ChEBI" id="CHEBI:18420"/>
    </ligand>
</feature>
<feature type="binding site" evidence="5 9">
    <location>
        <position position="60"/>
    </location>
    <ligand>
        <name>Mg(2+)</name>
        <dbReference type="ChEBI" id="CHEBI:18420"/>
    </ligand>
</feature>
<feature type="modified residue" description="Phosphothreonine" evidence="7">
    <location>
        <position position="6"/>
    </location>
</feature>
<feature type="modified residue" description="4-aspartylphosphate" evidence="1 7">
    <location>
        <position position="58"/>
    </location>
</feature>
<feature type="mutagenesis site" description="Loss of phosphorylation by PknG/PknK/PknJ." evidence="7">
    <original>T</original>
    <variation>A</variation>
    <location>
        <position position="6"/>
    </location>
</feature>
<feature type="mutagenesis site" description="Loss of phosphorylation by PrrB." evidence="7">
    <original>D</original>
    <variation>A</variation>
    <location>
        <position position="58"/>
    </location>
</feature>
<feature type="strand" evidence="11">
    <location>
        <begin position="9"/>
        <end position="13"/>
    </location>
</feature>
<feature type="helix" evidence="11">
    <location>
        <begin position="17"/>
        <end position="29"/>
    </location>
</feature>
<feature type="strand" evidence="11">
    <location>
        <begin position="33"/>
        <end position="39"/>
    </location>
</feature>
<feature type="helix" evidence="11">
    <location>
        <begin position="40"/>
        <end position="49"/>
    </location>
</feature>
<feature type="strand" evidence="11">
    <location>
        <begin position="53"/>
        <end position="60"/>
    </location>
</feature>
<feature type="strand" evidence="11">
    <location>
        <begin position="62"/>
        <end position="64"/>
    </location>
</feature>
<feature type="helix" evidence="11">
    <location>
        <begin position="66"/>
        <end position="75"/>
    </location>
</feature>
<feature type="strand" evidence="11">
    <location>
        <begin position="82"/>
        <end position="86"/>
    </location>
</feature>
<feature type="turn" evidence="11">
    <location>
        <begin position="90"/>
        <end position="92"/>
    </location>
</feature>
<feature type="turn" evidence="11">
    <location>
        <begin position="96"/>
        <end position="101"/>
    </location>
</feature>
<feature type="strand" evidence="11">
    <location>
        <begin position="103"/>
        <end position="109"/>
    </location>
</feature>
<feature type="helix" evidence="11">
    <location>
        <begin position="112"/>
        <end position="127"/>
    </location>
</feature>
<feature type="strand" evidence="11">
    <location>
        <begin position="136"/>
        <end position="139"/>
    </location>
</feature>
<feature type="strand" evidence="11">
    <location>
        <begin position="142"/>
        <end position="145"/>
    </location>
</feature>
<feature type="turn" evidence="11">
    <location>
        <begin position="146"/>
        <end position="149"/>
    </location>
</feature>
<feature type="strand" evidence="11">
    <location>
        <begin position="150"/>
        <end position="153"/>
    </location>
</feature>
<feature type="strand" evidence="10">
    <location>
        <begin position="156"/>
        <end position="158"/>
    </location>
</feature>
<feature type="helix" evidence="11">
    <location>
        <begin position="162"/>
        <end position="173"/>
    </location>
</feature>
<feature type="turn" evidence="11">
    <location>
        <begin position="174"/>
        <end position="176"/>
    </location>
</feature>
<feature type="helix" evidence="11">
    <location>
        <begin position="181"/>
        <end position="189"/>
    </location>
</feature>
<feature type="helix" evidence="11">
    <location>
        <begin position="199"/>
        <end position="212"/>
    </location>
</feature>
<feature type="strand" evidence="11">
    <location>
        <begin position="220"/>
        <end position="223"/>
    </location>
</feature>
<feature type="turn" evidence="11">
    <location>
        <begin position="224"/>
        <end position="226"/>
    </location>
</feature>
<feature type="strand" evidence="11">
    <location>
        <begin position="227"/>
        <end position="230"/>
    </location>
</feature>
<dbReference type="EMBL" id="AL123456">
    <property type="protein sequence ID" value="CCP43651.1"/>
    <property type="status" value="ALT_INIT"/>
    <property type="molecule type" value="Genomic_DNA"/>
</dbReference>
<dbReference type="PIR" id="D70783">
    <property type="entry name" value="D70783"/>
</dbReference>
<dbReference type="RefSeq" id="NP_215418.1">
    <property type="nucleotide sequence ID" value="NC_000962.3"/>
</dbReference>
<dbReference type="PDB" id="1YS6">
    <property type="method" value="X-ray"/>
    <property type="resolution" value="1.77 A"/>
    <property type="chains" value="A/B=1-233"/>
</dbReference>
<dbReference type="PDB" id="1YS7">
    <property type="method" value="X-ray"/>
    <property type="resolution" value="1.58 A"/>
    <property type="chains" value="A/B=1-233"/>
</dbReference>
<dbReference type="PDBsum" id="1YS6"/>
<dbReference type="PDBsum" id="1YS7"/>
<dbReference type="SMR" id="P9WGM1"/>
<dbReference type="DIP" id="DIP-29035N"/>
<dbReference type="FunCoup" id="P9WGM1">
    <property type="interactions" value="64"/>
</dbReference>
<dbReference type="IntAct" id="P9WGM1">
    <property type="interactions" value="1"/>
</dbReference>
<dbReference type="STRING" id="83332.Rv0903c"/>
<dbReference type="iPTMnet" id="P9WGM1"/>
<dbReference type="PaxDb" id="83332-Rv0903c"/>
<dbReference type="DNASU" id="885209"/>
<dbReference type="GeneID" id="885209"/>
<dbReference type="KEGG" id="mtu:Rv0903c"/>
<dbReference type="PATRIC" id="fig|83332.12.peg.1006"/>
<dbReference type="TubercuList" id="Rv0903c"/>
<dbReference type="eggNOG" id="COG0745">
    <property type="taxonomic scope" value="Bacteria"/>
</dbReference>
<dbReference type="InParanoid" id="P9WGM1"/>
<dbReference type="OrthoDB" id="4760923at2"/>
<dbReference type="EvolutionaryTrace" id="P9WGM1"/>
<dbReference type="Proteomes" id="UP000001584">
    <property type="component" value="Chromosome"/>
</dbReference>
<dbReference type="GO" id="GO:0005829">
    <property type="term" value="C:cytosol"/>
    <property type="evidence" value="ECO:0007005"/>
    <property type="project" value="MTBBASE"/>
</dbReference>
<dbReference type="GO" id="GO:0005886">
    <property type="term" value="C:plasma membrane"/>
    <property type="evidence" value="ECO:0007005"/>
    <property type="project" value="MTBBASE"/>
</dbReference>
<dbReference type="GO" id="GO:0032993">
    <property type="term" value="C:protein-DNA complex"/>
    <property type="evidence" value="ECO:0000318"/>
    <property type="project" value="GO_Central"/>
</dbReference>
<dbReference type="GO" id="GO:0005509">
    <property type="term" value="F:calcium ion binding"/>
    <property type="evidence" value="ECO:0000314"/>
    <property type="project" value="MTBBASE"/>
</dbReference>
<dbReference type="GO" id="GO:0000287">
    <property type="term" value="F:magnesium ion binding"/>
    <property type="evidence" value="ECO:0000314"/>
    <property type="project" value="MTBBASE"/>
</dbReference>
<dbReference type="GO" id="GO:0000156">
    <property type="term" value="F:phosphorelay response regulator activity"/>
    <property type="evidence" value="ECO:0000318"/>
    <property type="project" value="GO_Central"/>
</dbReference>
<dbReference type="GO" id="GO:0000976">
    <property type="term" value="F:transcription cis-regulatory region binding"/>
    <property type="evidence" value="ECO:0000318"/>
    <property type="project" value="GO_Central"/>
</dbReference>
<dbReference type="GO" id="GO:0006355">
    <property type="term" value="P:regulation of DNA-templated transcription"/>
    <property type="evidence" value="ECO:0000318"/>
    <property type="project" value="GO_Central"/>
</dbReference>
<dbReference type="CDD" id="cd17627">
    <property type="entry name" value="REC_OmpR_PrrA-like"/>
    <property type="match status" value="1"/>
</dbReference>
<dbReference type="CDD" id="cd00383">
    <property type="entry name" value="trans_reg_C"/>
    <property type="match status" value="1"/>
</dbReference>
<dbReference type="FunFam" id="1.10.10.10:FF:000233">
    <property type="entry name" value="DNA-binding response regulator PrrA"/>
    <property type="match status" value="1"/>
</dbReference>
<dbReference type="FunFam" id="3.40.50.2300:FF:000103">
    <property type="entry name" value="DNA-binding response regulator PrrA"/>
    <property type="match status" value="1"/>
</dbReference>
<dbReference type="Gene3D" id="3.40.50.2300">
    <property type="match status" value="1"/>
</dbReference>
<dbReference type="Gene3D" id="6.10.250.690">
    <property type="match status" value="1"/>
</dbReference>
<dbReference type="Gene3D" id="1.10.10.10">
    <property type="entry name" value="Winged helix-like DNA-binding domain superfamily/Winged helix DNA-binding domain"/>
    <property type="match status" value="1"/>
</dbReference>
<dbReference type="InterPro" id="IPR011006">
    <property type="entry name" value="CheY-like_superfamily"/>
</dbReference>
<dbReference type="InterPro" id="IPR001867">
    <property type="entry name" value="OmpR/PhoB-type_DNA-bd"/>
</dbReference>
<dbReference type="InterPro" id="IPR001789">
    <property type="entry name" value="Sig_transdc_resp-reg_receiver"/>
</dbReference>
<dbReference type="InterPro" id="IPR039420">
    <property type="entry name" value="WalR-like"/>
</dbReference>
<dbReference type="InterPro" id="IPR036388">
    <property type="entry name" value="WH-like_DNA-bd_sf"/>
</dbReference>
<dbReference type="PANTHER" id="PTHR48111">
    <property type="entry name" value="REGULATOR OF RPOS"/>
    <property type="match status" value="1"/>
</dbReference>
<dbReference type="PANTHER" id="PTHR48111:SF22">
    <property type="entry name" value="REGULATOR OF RPOS"/>
    <property type="match status" value="1"/>
</dbReference>
<dbReference type="Pfam" id="PF00072">
    <property type="entry name" value="Response_reg"/>
    <property type="match status" value="1"/>
</dbReference>
<dbReference type="Pfam" id="PF00486">
    <property type="entry name" value="Trans_reg_C"/>
    <property type="match status" value="1"/>
</dbReference>
<dbReference type="SMART" id="SM00448">
    <property type="entry name" value="REC"/>
    <property type="match status" value="1"/>
</dbReference>
<dbReference type="SMART" id="SM00862">
    <property type="entry name" value="Trans_reg_C"/>
    <property type="match status" value="1"/>
</dbReference>
<dbReference type="SUPFAM" id="SSF52172">
    <property type="entry name" value="CheY-like"/>
    <property type="match status" value="1"/>
</dbReference>
<dbReference type="PROSITE" id="PS51755">
    <property type="entry name" value="OMPR_PHOB"/>
    <property type="match status" value="1"/>
</dbReference>
<dbReference type="PROSITE" id="PS50110">
    <property type="entry name" value="RESPONSE_REGULATORY"/>
    <property type="match status" value="1"/>
</dbReference>
<evidence type="ECO:0000255" key="1">
    <source>
        <dbReference type="PROSITE-ProRule" id="PRU00169"/>
    </source>
</evidence>
<evidence type="ECO:0000255" key="2">
    <source>
        <dbReference type="PROSITE-ProRule" id="PRU01091"/>
    </source>
</evidence>
<evidence type="ECO:0000269" key="3">
    <source>
    </source>
</evidence>
<evidence type="ECO:0000269" key="4">
    <source>
    </source>
</evidence>
<evidence type="ECO:0000269" key="5">
    <source>
    </source>
</evidence>
<evidence type="ECO:0000269" key="6">
    <source>
    </source>
</evidence>
<evidence type="ECO:0000269" key="7">
    <source>
    </source>
</evidence>
<evidence type="ECO:0000305" key="8"/>
<evidence type="ECO:0007744" key="9">
    <source>
        <dbReference type="PDB" id="1YS7"/>
    </source>
</evidence>
<evidence type="ECO:0007829" key="10">
    <source>
        <dbReference type="PDB" id="1YS6"/>
    </source>
</evidence>
<evidence type="ECO:0007829" key="11">
    <source>
        <dbReference type="PDB" id="1YS7"/>
    </source>
</evidence>
<reference key="1">
    <citation type="journal article" date="1998" name="Nature">
        <title>Deciphering the biology of Mycobacterium tuberculosis from the complete genome sequence.</title>
        <authorList>
            <person name="Cole S.T."/>
            <person name="Brosch R."/>
            <person name="Parkhill J."/>
            <person name="Garnier T."/>
            <person name="Churcher C.M."/>
            <person name="Harris D.E."/>
            <person name="Gordon S.V."/>
            <person name="Eiglmeier K."/>
            <person name="Gas S."/>
            <person name="Barry C.E. III"/>
            <person name="Tekaia F."/>
            <person name="Badcock K."/>
            <person name="Basham D."/>
            <person name="Brown D."/>
            <person name="Chillingworth T."/>
            <person name="Connor R."/>
            <person name="Davies R.M."/>
            <person name="Devlin K."/>
            <person name="Feltwell T."/>
            <person name="Gentles S."/>
            <person name="Hamlin N."/>
            <person name="Holroyd S."/>
            <person name="Hornsby T."/>
            <person name="Jagels K."/>
            <person name="Krogh A."/>
            <person name="McLean J."/>
            <person name="Moule S."/>
            <person name="Murphy L.D."/>
            <person name="Oliver S."/>
            <person name="Osborne J."/>
            <person name="Quail M.A."/>
            <person name="Rajandream M.A."/>
            <person name="Rogers J."/>
            <person name="Rutter S."/>
            <person name="Seeger K."/>
            <person name="Skelton S."/>
            <person name="Squares S."/>
            <person name="Squares R."/>
            <person name="Sulston J.E."/>
            <person name="Taylor K."/>
            <person name="Whitehead S."/>
            <person name="Barrell B.G."/>
        </authorList>
    </citation>
    <scope>NUCLEOTIDE SEQUENCE [LARGE SCALE GENOMIC DNA]</scope>
    <source>
        <strain>ATCC 25618 / H37Rv</strain>
    </source>
</reference>
<reference key="2">
    <citation type="journal article" date="2002" name="Infect. Immun.">
        <title>Transient requirement of the PrrA-PrrB two-component system for early intracellular multiplication of Mycobacterium tuberculosis.</title>
        <authorList>
            <person name="Ewann F."/>
            <person name="Jackson M."/>
            <person name="Pethe K."/>
            <person name="Cooper A."/>
            <person name="Mielcarek N."/>
            <person name="Ensergueix D."/>
            <person name="Gicquel B."/>
            <person name="Locht C."/>
            <person name="Supply P."/>
        </authorList>
    </citation>
    <scope>FUNCTION</scope>
    <source>
        <strain>Mt103</strain>
    </source>
</reference>
<reference key="3">
    <citation type="journal article" date="2004" name="Microbiology">
        <title>Intracellular autoregulation of the Mycobacterium tuberculosis PrrA response regulator.</title>
        <authorList>
            <person name="Ewann F."/>
            <person name="Locht C."/>
            <person name="Supply P."/>
        </authorList>
    </citation>
    <scope>FUNCTION</scope>
    <scope>PHOSPHORYLATION</scope>
    <source>
        <strain>Mt103</strain>
    </source>
</reference>
<reference key="4">
    <citation type="journal article" date="2011" name="Mol. Cell. Proteomics">
        <title>Proteogenomic analysis of Mycobacterium tuberculosis by high resolution mass spectrometry.</title>
        <authorList>
            <person name="Kelkar D.S."/>
            <person name="Kumar D."/>
            <person name="Kumar P."/>
            <person name="Balakrishnan L."/>
            <person name="Muthusamy B."/>
            <person name="Yadav A.K."/>
            <person name="Shrivastava P."/>
            <person name="Marimuthu A."/>
            <person name="Anand S."/>
            <person name="Sundaram H."/>
            <person name="Kingsbury R."/>
            <person name="Harsha H.C."/>
            <person name="Nair B."/>
            <person name="Prasad T.S."/>
            <person name="Chauhan D.S."/>
            <person name="Katoch K."/>
            <person name="Katoch V.M."/>
            <person name="Kumar P."/>
            <person name="Chaerkady R."/>
            <person name="Ramachandran S."/>
            <person name="Dash D."/>
            <person name="Pandey A."/>
        </authorList>
    </citation>
    <scope>IDENTIFICATION BY MASS SPECTROMETRY [LARGE SCALE ANALYSIS]</scope>
    <source>
        <strain>ATCC 25618 / H37Rv</strain>
    </source>
</reference>
<reference key="5">
    <citation type="journal article" date="2012" name="J. Bacteriol.">
        <title>The prrAB two-component system is essential for Mycobacterium tuberculosis viability and is induced under nitrogen-limiting conditions.</title>
        <authorList>
            <person name="Haydel S.E."/>
            <person name="Malhotra V."/>
            <person name="Cornelison G.L."/>
            <person name="Clark-Curtiss J.E."/>
        </authorList>
    </citation>
    <scope>FUNCTION</scope>
    <scope>INDUCTION BY NITROGEN-LIMITING CONDITIONS</scope>
</reference>
<reference evidence="9" key="6">
    <citation type="journal article" date="2006" name="J. Biol. Chem.">
        <title>The structural basis of signal transduction for the response regulator PrrA from Mycobacterium tuberculosis.</title>
        <authorList>
            <person name="Nowak E."/>
            <person name="Panjikar S."/>
            <person name="Konarev P."/>
            <person name="Svergun D.I."/>
            <person name="Tucker P.A."/>
        </authorList>
    </citation>
    <scope>X-RAY CRYSTALLOGRAPHY (1.58 ANGSTROMS) IN COMPLEX WITH MAGNESIUM</scope>
</reference>
<reference key="7">
    <citation type="journal article" date="2017" name="Biochem. J.">
        <title>Dual phosphorylation in response regulator protein PrrA is crucial for intracellular survival of mycobacteria consequent upon transcriptional activation.</title>
        <authorList>
            <person name="Mishra A.K."/>
            <person name="Yabaji S.M."/>
            <person name="Dubey R.K."/>
            <person name="Dhamija E."/>
            <person name="Srivastava K.K."/>
        </authorList>
    </citation>
    <scope>FUNCTION</scope>
    <scope>PHOSPHORYLATION AT THR-6 AND ASP-58</scope>
    <scope>MUTAGENESIS OF THR-6 AND ASP-58</scope>
    <source>
        <strain>ATCC 25618 / H37Rv</strain>
    </source>
</reference>
<sequence length="233" mass="25009">MDTGVTSPRVLVVDDDSDVLASLERGLRLSGFEVATAVDGAEALRSATENRPDAIVLDINMPVLDGVSVVTALRAMDNDVPVCVLSARSSVDDRVAGLEAGADDYLVKPFVLAELVARVKALLRRRGSTATSSSETITVGPLEVDIPGRRARVNGVDVDLTKREFDLLAVLAEHKTAVLSRAQLLELVWGYDFAADTNVVDVFIGYLRRKLEAGGGPRLLHTVRGVGFVLRMQ</sequence>
<comment type="function">
    <text evidence="3 4 6 7">Member of the two-component regulatory system PrrB/PrrA that is involved specifically in early intracellular multiplication of Mycobacterium and is essential for its viability (PubMed:11953357, PubMed:22081401). Upon phosphorylation by PrrB, functions as a transcription regulator by direct binding to promoter regions of target genes to positively regulate their expression. Autoregulates its own expression (PubMed:14702417, PubMed:29101285).</text>
</comment>
<comment type="subcellular location">
    <subcellularLocation>
        <location evidence="8">Cytoplasm</location>
    </subcellularLocation>
</comment>
<comment type="induction">
    <text evidence="6">By nitrogen-limiting conditions.</text>
</comment>
<comment type="PTM">
    <text evidence="7">Phosphorylated by PrrB at Asp-58. Also phosphorylated on Thr-6 by PknG/PknK/PknJ. The two phosphorylations act synergistically to activate the DNA-binding activity of PrrA.</text>
</comment>
<comment type="sequence caution" evidence="8">
    <conflict type="erroneous initiation">
        <sequence resource="EMBL-CDS" id="CCP43651"/>
    </conflict>
    <text>Extended N-terminus.</text>
</comment>
<name>PRRA_MYCTU</name>
<protein>
    <recommendedName>
        <fullName>Transcriptional regulatory protein PrrA</fullName>
    </recommendedName>
</protein>
<organism>
    <name type="scientific">Mycobacterium tuberculosis (strain ATCC 25618 / H37Rv)</name>
    <dbReference type="NCBI Taxonomy" id="83332"/>
    <lineage>
        <taxon>Bacteria</taxon>
        <taxon>Bacillati</taxon>
        <taxon>Actinomycetota</taxon>
        <taxon>Actinomycetes</taxon>
        <taxon>Mycobacteriales</taxon>
        <taxon>Mycobacteriaceae</taxon>
        <taxon>Mycobacterium</taxon>
        <taxon>Mycobacterium tuberculosis complex</taxon>
    </lineage>
</organism>
<keyword id="KW-0002">3D-structure</keyword>
<keyword id="KW-0963">Cytoplasm</keyword>
<keyword id="KW-0238">DNA-binding</keyword>
<keyword id="KW-0460">Magnesium</keyword>
<keyword id="KW-0479">Metal-binding</keyword>
<keyword id="KW-0597">Phosphoprotein</keyword>
<keyword id="KW-1185">Reference proteome</keyword>
<keyword id="KW-0804">Transcription</keyword>
<keyword id="KW-0805">Transcription regulation</keyword>
<keyword id="KW-0902">Two-component regulatory system</keyword>
<gene>
    <name type="primary">prrA</name>
    <name type="ordered locus">Rv0903c</name>
    <name type="ORF">MTCY31.31c</name>
</gene>